<keyword id="KW-0067">ATP-binding</keyword>
<keyword id="KW-0963">Cytoplasm</keyword>
<keyword id="KW-0275">Fatty acid biosynthesis</keyword>
<keyword id="KW-0276">Fatty acid metabolism</keyword>
<keyword id="KW-0444">Lipid biosynthesis</keyword>
<keyword id="KW-0443">Lipid metabolism</keyword>
<keyword id="KW-0547">Nucleotide-binding</keyword>
<keyword id="KW-0808">Transferase</keyword>
<gene>
    <name evidence="1" type="primary">accA</name>
    <name type="ordered locus">BB1737</name>
</gene>
<proteinExistence type="inferred from homology"/>
<sequence>MRNTFLEFEQPLAELENKIEQLRYVQADSAVDISDEIGRLQQKSQNLAKEIYGKLTPWQTALVARHPQRPYTLDYVREIFTDFHELHGDRMYADDQSIVGGLARFNGSACMVIGHQKGRDTKERAARNFGMPRPEGYRKALRLMRLAEKFRLPIFTFIDTPGAYPGIGAEERGQSEAIGRNLYAMAELKVPVICTVIGEGGSGGALAIAVGNAVLMLQYATYSVISPEGCASILWRSADKAPEAAEALAITAPRLKDLGLVDRVVNEPVGGAHRDPRVMARLLRRALGDALRQLQGLGPEQLVDQRLQRLMSYGRFQEVRA</sequence>
<dbReference type="EC" id="2.1.3.15" evidence="1"/>
<dbReference type="EMBL" id="BX640442">
    <property type="protein sequence ID" value="CAE32234.1"/>
    <property type="molecule type" value="Genomic_DNA"/>
</dbReference>
<dbReference type="RefSeq" id="WP_003810007.1">
    <property type="nucleotide sequence ID" value="NC_002927.3"/>
</dbReference>
<dbReference type="SMR" id="Q7WLK8"/>
<dbReference type="KEGG" id="bbr:BB1737"/>
<dbReference type="eggNOG" id="COG0825">
    <property type="taxonomic scope" value="Bacteria"/>
</dbReference>
<dbReference type="HOGENOM" id="CLU_015486_0_2_4"/>
<dbReference type="UniPathway" id="UPA00655">
    <property type="reaction ID" value="UER00711"/>
</dbReference>
<dbReference type="Proteomes" id="UP000001027">
    <property type="component" value="Chromosome"/>
</dbReference>
<dbReference type="GO" id="GO:0009317">
    <property type="term" value="C:acetyl-CoA carboxylase complex"/>
    <property type="evidence" value="ECO:0007669"/>
    <property type="project" value="InterPro"/>
</dbReference>
<dbReference type="GO" id="GO:0003989">
    <property type="term" value="F:acetyl-CoA carboxylase activity"/>
    <property type="evidence" value="ECO:0007669"/>
    <property type="project" value="InterPro"/>
</dbReference>
<dbReference type="GO" id="GO:0005524">
    <property type="term" value="F:ATP binding"/>
    <property type="evidence" value="ECO:0007669"/>
    <property type="project" value="UniProtKB-KW"/>
</dbReference>
<dbReference type="GO" id="GO:0016743">
    <property type="term" value="F:carboxyl- or carbamoyltransferase activity"/>
    <property type="evidence" value="ECO:0007669"/>
    <property type="project" value="UniProtKB-UniRule"/>
</dbReference>
<dbReference type="GO" id="GO:0006633">
    <property type="term" value="P:fatty acid biosynthetic process"/>
    <property type="evidence" value="ECO:0007669"/>
    <property type="project" value="UniProtKB-KW"/>
</dbReference>
<dbReference type="GO" id="GO:2001295">
    <property type="term" value="P:malonyl-CoA biosynthetic process"/>
    <property type="evidence" value="ECO:0007669"/>
    <property type="project" value="UniProtKB-UniRule"/>
</dbReference>
<dbReference type="Gene3D" id="3.90.226.10">
    <property type="entry name" value="2-enoyl-CoA Hydratase, Chain A, domain 1"/>
    <property type="match status" value="1"/>
</dbReference>
<dbReference type="HAMAP" id="MF_00823">
    <property type="entry name" value="AcetylCoA_CT_alpha"/>
    <property type="match status" value="1"/>
</dbReference>
<dbReference type="InterPro" id="IPR001095">
    <property type="entry name" value="Acetyl_CoA_COase_a_su"/>
</dbReference>
<dbReference type="InterPro" id="IPR029045">
    <property type="entry name" value="ClpP/crotonase-like_dom_sf"/>
</dbReference>
<dbReference type="InterPro" id="IPR011763">
    <property type="entry name" value="COA_CT_C"/>
</dbReference>
<dbReference type="NCBIfam" id="TIGR00513">
    <property type="entry name" value="accA"/>
    <property type="match status" value="1"/>
</dbReference>
<dbReference type="NCBIfam" id="NF041504">
    <property type="entry name" value="AccA_sub"/>
    <property type="match status" value="1"/>
</dbReference>
<dbReference type="NCBIfam" id="NF004344">
    <property type="entry name" value="PRK05724.1"/>
    <property type="match status" value="1"/>
</dbReference>
<dbReference type="PANTHER" id="PTHR42853">
    <property type="entry name" value="ACETYL-COENZYME A CARBOXYLASE CARBOXYL TRANSFERASE SUBUNIT ALPHA"/>
    <property type="match status" value="1"/>
</dbReference>
<dbReference type="PANTHER" id="PTHR42853:SF3">
    <property type="entry name" value="ACETYL-COENZYME A CARBOXYLASE CARBOXYL TRANSFERASE SUBUNIT ALPHA, CHLOROPLASTIC"/>
    <property type="match status" value="1"/>
</dbReference>
<dbReference type="Pfam" id="PF03255">
    <property type="entry name" value="ACCA"/>
    <property type="match status" value="1"/>
</dbReference>
<dbReference type="PRINTS" id="PR01069">
    <property type="entry name" value="ACCCTRFRASEA"/>
</dbReference>
<dbReference type="SUPFAM" id="SSF52096">
    <property type="entry name" value="ClpP/crotonase"/>
    <property type="match status" value="1"/>
</dbReference>
<dbReference type="PROSITE" id="PS50989">
    <property type="entry name" value="COA_CT_CTER"/>
    <property type="match status" value="1"/>
</dbReference>
<organism>
    <name type="scientific">Bordetella bronchiseptica (strain ATCC BAA-588 / NCTC 13252 / RB50)</name>
    <name type="common">Alcaligenes bronchisepticus</name>
    <dbReference type="NCBI Taxonomy" id="257310"/>
    <lineage>
        <taxon>Bacteria</taxon>
        <taxon>Pseudomonadati</taxon>
        <taxon>Pseudomonadota</taxon>
        <taxon>Betaproteobacteria</taxon>
        <taxon>Burkholderiales</taxon>
        <taxon>Alcaligenaceae</taxon>
        <taxon>Bordetella</taxon>
    </lineage>
</organism>
<name>ACCA_BORBR</name>
<accession>Q7WLK8</accession>
<reference key="1">
    <citation type="journal article" date="2003" name="Nat. Genet.">
        <title>Comparative analysis of the genome sequences of Bordetella pertussis, Bordetella parapertussis and Bordetella bronchiseptica.</title>
        <authorList>
            <person name="Parkhill J."/>
            <person name="Sebaihia M."/>
            <person name="Preston A."/>
            <person name="Murphy L.D."/>
            <person name="Thomson N.R."/>
            <person name="Harris D.E."/>
            <person name="Holden M.T.G."/>
            <person name="Churcher C.M."/>
            <person name="Bentley S.D."/>
            <person name="Mungall K.L."/>
            <person name="Cerdeno-Tarraga A.-M."/>
            <person name="Temple L."/>
            <person name="James K.D."/>
            <person name="Harris B."/>
            <person name="Quail M.A."/>
            <person name="Achtman M."/>
            <person name="Atkin R."/>
            <person name="Baker S."/>
            <person name="Basham D."/>
            <person name="Bason N."/>
            <person name="Cherevach I."/>
            <person name="Chillingworth T."/>
            <person name="Collins M."/>
            <person name="Cronin A."/>
            <person name="Davis P."/>
            <person name="Doggett J."/>
            <person name="Feltwell T."/>
            <person name="Goble A."/>
            <person name="Hamlin N."/>
            <person name="Hauser H."/>
            <person name="Holroyd S."/>
            <person name="Jagels K."/>
            <person name="Leather S."/>
            <person name="Moule S."/>
            <person name="Norberczak H."/>
            <person name="O'Neil S."/>
            <person name="Ormond D."/>
            <person name="Price C."/>
            <person name="Rabbinowitsch E."/>
            <person name="Rutter S."/>
            <person name="Sanders M."/>
            <person name="Saunders D."/>
            <person name="Seeger K."/>
            <person name="Sharp S."/>
            <person name="Simmonds M."/>
            <person name="Skelton J."/>
            <person name="Squares R."/>
            <person name="Squares S."/>
            <person name="Stevens K."/>
            <person name="Unwin L."/>
            <person name="Whitehead S."/>
            <person name="Barrell B.G."/>
            <person name="Maskell D.J."/>
        </authorList>
    </citation>
    <scope>NUCLEOTIDE SEQUENCE [LARGE SCALE GENOMIC DNA]</scope>
    <source>
        <strain>ATCC BAA-588 / NCTC 13252 / RB50</strain>
    </source>
</reference>
<comment type="function">
    <text evidence="1">Component of the acetyl coenzyme A carboxylase (ACC) complex. First, biotin carboxylase catalyzes the carboxylation of biotin on its carrier protein (BCCP) and then the CO(2) group is transferred by the carboxyltransferase to acetyl-CoA to form malonyl-CoA.</text>
</comment>
<comment type="catalytic activity">
    <reaction evidence="1">
        <text>N(6)-carboxybiotinyl-L-lysyl-[protein] + acetyl-CoA = N(6)-biotinyl-L-lysyl-[protein] + malonyl-CoA</text>
        <dbReference type="Rhea" id="RHEA:54728"/>
        <dbReference type="Rhea" id="RHEA-COMP:10505"/>
        <dbReference type="Rhea" id="RHEA-COMP:10506"/>
        <dbReference type="ChEBI" id="CHEBI:57288"/>
        <dbReference type="ChEBI" id="CHEBI:57384"/>
        <dbReference type="ChEBI" id="CHEBI:83144"/>
        <dbReference type="ChEBI" id="CHEBI:83145"/>
        <dbReference type="EC" id="2.1.3.15"/>
    </reaction>
</comment>
<comment type="pathway">
    <text evidence="1">Lipid metabolism; malonyl-CoA biosynthesis; malonyl-CoA from acetyl-CoA: step 1/1.</text>
</comment>
<comment type="subunit">
    <text evidence="1">Acetyl-CoA carboxylase is a heterohexamer composed of biotin carboxyl carrier protein (AccB), biotin carboxylase (AccC) and two subunits each of ACCase subunit alpha (AccA) and ACCase subunit beta (AccD).</text>
</comment>
<comment type="subcellular location">
    <subcellularLocation>
        <location evidence="1">Cytoplasm</location>
    </subcellularLocation>
</comment>
<comment type="similarity">
    <text evidence="1">Belongs to the AccA family.</text>
</comment>
<evidence type="ECO:0000255" key="1">
    <source>
        <dbReference type="HAMAP-Rule" id="MF_00823"/>
    </source>
</evidence>
<evidence type="ECO:0000255" key="2">
    <source>
        <dbReference type="PROSITE-ProRule" id="PRU01137"/>
    </source>
</evidence>
<feature type="chain" id="PRO_0000223739" description="Acetyl-coenzyme A carboxylase carboxyl transferase subunit alpha">
    <location>
        <begin position="1"/>
        <end position="321"/>
    </location>
</feature>
<feature type="domain" description="CoA carboxyltransferase C-terminal" evidence="2">
    <location>
        <begin position="39"/>
        <end position="293"/>
    </location>
</feature>
<protein>
    <recommendedName>
        <fullName evidence="1">Acetyl-coenzyme A carboxylase carboxyl transferase subunit alpha</fullName>
        <shortName evidence="1">ACCase subunit alpha</shortName>
        <shortName evidence="1">Acetyl-CoA carboxylase carboxyltransferase subunit alpha</shortName>
        <ecNumber evidence="1">2.1.3.15</ecNumber>
    </recommendedName>
</protein>